<evidence type="ECO:0000256" key="1">
    <source>
        <dbReference type="SAM" id="MobiDB-lite"/>
    </source>
</evidence>
<evidence type="ECO:0000269" key="2">
    <source>
    </source>
</evidence>
<evidence type="ECO:0000305" key="3"/>
<keyword id="KW-0489">Methyltransferase</keyword>
<keyword id="KW-1267">Proteomics identification</keyword>
<keyword id="KW-1185">Reference proteome</keyword>
<keyword id="KW-0808">Transferase</keyword>
<name>MET25_HUMAN</name>
<feature type="chain" id="PRO_0000252148" description="Probable methyltransferase-like protein 25">
    <location>
        <begin position="1"/>
        <end position="603"/>
    </location>
</feature>
<feature type="region of interest" description="Disordered" evidence="1">
    <location>
        <begin position="326"/>
        <end position="352"/>
    </location>
</feature>
<feature type="sequence variant" id="VAR_027779" description="In dbSNP:rs4296098." evidence="2">
    <original>Q</original>
    <variation>K</variation>
    <location>
        <position position="249"/>
    </location>
</feature>
<feature type="sequence conflict" description="In Ref. 3; BAB15484." evidence="3" ref="3">
    <original>E</original>
    <variation>V</variation>
    <location>
        <position position="85"/>
    </location>
</feature>
<feature type="sequence conflict" description="In Ref. 3; BAB15484." evidence="3" ref="3">
    <original>N</original>
    <variation>S</variation>
    <location>
        <position position="152"/>
    </location>
</feature>
<dbReference type="EC" id="2.1.1.-" evidence="3"/>
<dbReference type="EMBL" id="AC083811">
    <property type="status" value="NOT_ANNOTATED_CDS"/>
    <property type="molecule type" value="Genomic_DNA"/>
</dbReference>
<dbReference type="EMBL" id="AC089998">
    <property type="status" value="NOT_ANNOTATED_CDS"/>
    <property type="molecule type" value="Genomic_DNA"/>
</dbReference>
<dbReference type="EMBL" id="BC029120">
    <property type="protein sequence ID" value="AAH29120.1"/>
    <property type="molecule type" value="mRNA"/>
</dbReference>
<dbReference type="EMBL" id="AK026442">
    <property type="protein sequence ID" value="BAB15484.1"/>
    <property type="status" value="ALT_SEQ"/>
    <property type="molecule type" value="mRNA"/>
</dbReference>
<dbReference type="CCDS" id="CCDS9024.1"/>
<dbReference type="RefSeq" id="NP_001306604.1">
    <property type="nucleotide sequence ID" value="NM_001319675.1"/>
</dbReference>
<dbReference type="RefSeq" id="NP_001334863.1">
    <property type="nucleotide sequence ID" value="NM_001347934.1"/>
</dbReference>
<dbReference type="RefSeq" id="NP_115606.2">
    <property type="nucleotide sequence ID" value="NM_032230.3"/>
</dbReference>
<dbReference type="BioGRID" id="123938">
    <property type="interactions" value="11"/>
</dbReference>
<dbReference type="FunCoup" id="Q8N6Q8">
    <property type="interactions" value="118"/>
</dbReference>
<dbReference type="IntAct" id="Q8N6Q8">
    <property type="interactions" value="6"/>
</dbReference>
<dbReference type="STRING" id="9606.ENSP00000248306"/>
<dbReference type="GlyGen" id="Q8N6Q8">
    <property type="glycosylation" value="1 site"/>
</dbReference>
<dbReference type="iPTMnet" id="Q8N6Q8"/>
<dbReference type="PhosphoSitePlus" id="Q8N6Q8"/>
<dbReference type="BioMuta" id="METTL25"/>
<dbReference type="DMDM" id="317373346"/>
<dbReference type="jPOST" id="Q8N6Q8"/>
<dbReference type="MassIVE" id="Q8N6Q8"/>
<dbReference type="PaxDb" id="9606-ENSP00000248306"/>
<dbReference type="PeptideAtlas" id="Q8N6Q8"/>
<dbReference type="ProteomicsDB" id="72215"/>
<dbReference type="Pumba" id="Q8N6Q8"/>
<dbReference type="Antibodypedia" id="51966">
    <property type="antibodies" value="93 antibodies from 11 providers"/>
</dbReference>
<dbReference type="DNASU" id="84190"/>
<dbReference type="Ensembl" id="ENST00000248306.8">
    <property type="protein sequence ID" value="ENSP00000248306.3"/>
    <property type="gene ID" value="ENSG00000127720.8"/>
</dbReference>
<dbReference type="GeneID" id="84190"/>
<dbReference type="KEGG" id="hsa:84190"/>
<dbReference type="MANE-Select" id="ENST00000248306.8">
    <property type="protein sequence ID" value="ENSP00000248306.3"/>
    <property type="RefSeq nucleotide sequence ID" value="NM_032230.3"/>
    <property type="RefSeq protein sequence ID" value="NP_115606.2"/>
</dbReference>
<dbReference type="UCSC" id="uc001szq.4">
    <property type="organism name" value="human"/>
</dbReference>
<dbReference type="AGR" id="HGNC:26228"/>
<dbReference type="CTD" id="84190"/>
<dbReference type="DisGeNET" id="84190"/>
<dbReference type="GeneCards" id="METTL25"/>
<dbReference type="HGNC" id="HGNC:26228">
    <property type="gene designation" value="METTL25"/>
</dbReference>
<dbReference type="HPA" id="ENSG00000127720">
    <property type="expression patterns" value="Low tissue specificity"/>
</dbReference>
<dbReference type="neXtProt" id="NX_Q8N6Q8"/>
<dbReference type="OpenTargets" id="ENSG00000127720"/>
<dbReference type="PharmGKB" id="PA142672297"/>
<dbReference type="VEuPathDB" id="HostDB:ENSG00000127720"/>
<dbReference type="eggNOG" id="KOG2651">
    <property type="taxonomic scope" value="Eukaryota"/>
</dbReference>
<dbReference type="GeneTree" id="ENSGT00530000063745"/>
<dbReference type="HOGENOM" id="CLU_016581_2_0_1"/>
<dbReference type="InParanoid" id="Q8N6Q8"/>
<dbReference type="OMA" id="LQAPYNW"/>
<dbReference type="OrthoDB" id="10258156at2759"/>
<dbReference type="PAN-GO" id="Q8N6Q8">
    <property type="GO annotations" value="0 GO annotations based on evolutionary models"/>
</dbReference>
<dbReference type="PhylomeDB" id="Q8N6Q8"/>
<dbReference type="TreeFam" id="TF312998"/>
<dbReference type="PathwayCommons" id="Q8N6Q8"/>
<dbReference type="SignaLink" id="Q8N6Q8"/>
<dbReference type="BioGRID-ORCS" id="84190">
    <property type="hits" value="20 hits in 1149 CRISPR screens"/>
</dbReference>
<dbReference type="ChiTaRS" id="METTL25">
    <property type="organism name" value="human"/>
</dbReference>
<dbReference type="GenomeRNAi" id="84190"/>
<dbReference type="Pharos" id="Q8N6Q8">
    <property type="development level" value="Tdark"/>
</dbReference>
<dbReference type="PRO" id="PR:Q8N6Q8"/>
<dbReference type="Proteomes" id="UP000005640">
    <property type="component" value="Chromosome 12"/>
</dbReference>
<dbReference type="RNAct" id="Q8N6Q8">
    <property type="molecule type" value="protein"/>
</dbReference>
<dbReference type="Bgee" id="ENSG00000127720">
    <property type="expression patterns" value="Expressed in germinal epithelium of ovary and 182 other cell types or tissues"/>
</dbReference>
<dbReference type="ExpressionAtlas" id="Q8N6Q8">
    <property type="expression patterns" value="baseline and differential"/>
</dbReference>
<dbReference type="GO" id="GO:0008168">
    <property type="term" value="F:methyltransferase activity"/>
    <property type="evidence" value="ECO:0007669"/>
    <property type="project" value="UniProtKB-KW"/>
</dbReference>
<dbReference type="GO" id="GO:0032259">
    <property type="term" value="P:methylation"/>
    <property type="evidence" value="ECO:0007669"/>
    <property type="project" value="UniProtKB-KW"/>
</dbReference>
<dbReference type="Gene3D" id="3.40.50.150">
    <property type="entry name" value="Vaccinia Virus protein VP39"/>
    <property type="match status" value="1"/>
</dbReference>
<dbReference type="InterPro" id="IPR025714">
    <property type="entry name" value="Methyltranfer_dom"/>
</dbReference>
<dbReference type="InterPro" id="IPR052220">
    <property type="entry name" value="METTL25"/>
</dbReference>
<dbReference type="InterPro" id="IPR029063">
    <property type="entry name" value="SAM-dependent_MTases_sf"/>
</dbReference>
<dbReference type="PANTHER" id="PTHR12496">
    <property type="entry name" value="CGI-41 METHYLTRANSFERASE"/>
    <property type="match status" value="1"/>
</dbReference>
<dbReference type="PANTHER" id="PTHR12496:SF9">
    <property type="entry name" value="METHYLTRANSFERASE-LIKE PROTEIN 25-RELATED"/>
    <property type="match status" value="1"/>
</dbReference>
<dbReference type="Pfam" id="PF13679">
    <property type="entry name" value="Methyltransf_32"/>
    <property type="match status" value="1"/>
</dbReference>
<dbReference type="SUPFAM" id="SSF53335">
    <property type="entry name" value="S-adenosyl-L-methionine-dependent methyltransferases"/>
    <property type="match status" value="1"/>
</dbReference>
<proteinExistence type="evidence at protein level"/>
<reference key="1">
    <citation type="journal article" date="2006" name="Nature">
        <title>The finished DNA sequence of human chromosome 12.</title>
        <authorList>
            <person name="Scherer S.E."/>
            <person name="Muzny D.M."/>
            <person name="Buhay C.J."/>
            <person name="Chen R."/>
            <person name="Cree A."/>
            <person name="Ding Y."/>
            <person name="Dugan-Rocha S."/>
            <person name="Gill R."/>
            <person name="Gunaratne P."/>
            <person name="Harris R.A."/>
            <person name="Hawes A.C."/>
            <person name="Hernandez J."/>
            <person name="Hodgson A.V."/>
            <person name="Hume J."/>
            <person name="Jackson A."/>
            <person name="Khan Z.M."/>
            <person name="Kovar-Smith C."/>
            <person name="Lewis L.R."/>
            <person name="Lozado R.J."/>
            <person name="Metzker M.L."/>
            <person name="Milosavljevic A."/>
            <person name="Miner G.R."/>
            <person name="Montgomery K.T."/>
            <person name="Morgan M.B."/>
            <person name="Nazareth L.V."/>
            <person name="Scott G."/>
            <person name="Sodergren E."/>
            <person name="Song X.-Z."/>
            <person name="Steffen D."/>
            <person name="Lovering R.C."/>
            <person name="Wheeler D.A."/>
            <person name="Worley K.C."/>
            <person name="Yuan Y."/>
            <person name="Zhang Z."/>
            <person name="Adams C.Q."/>
            <person name="Ansari-Lari M.A."/>
            <person name="Ayele M."/>
            <person name="Brown M.J."/>
            <person name="Chen G."/>
            <person name="Chen Z."/>
            <person name="Clerc-Blankenburg K.P."/>
            <person name="Davis C."/>
            <person name="Delgado O."/>
            <person name="Dinh H.H."/>
            <person name="Draper H."/>
            <person name="Gonzalez-Garay M.L."/>
            <person name="Havlak P."/>
            <person name="Jackson L.R."/>
            <person name="Jacob L.S."/>
            <person name="Kelly S.H."/>
            <person name="Li L."/>
            <person name="Li Z."/>
            <person name="Liu J."/>
            <person name="Liu W."/>
            <person name="Lu J."/>
            <person name="Maheshwari M."/>
            <person name="Nguyen B.-V."/>
            <person name="Okwuonu G.O."/>
            <person name="Pasternak S."/>
            <person name="Perez L.M."/>
            <person name="Plopper F.J.H."/>
            <person name="Santibanez J."/>
            <person name="Shen H."/>
            <person name="Tabor P.E."/>
            <person name="Verduzco D."/>
            <person name="Waldron L."/>
            <person name="Wang Q."/>
            <person name="Williams G.A."/>
            <person name="Zhang J."/>
            <person name="Zhou J."/>
            <person name="Allen C.C."/>
            <person name="Amin A.G."/>
            <person name="Anyalebechi V."/>
            <person name="Bailey M."/>
            <person name="Barbaria J.A."/>
            <person name="Bimage K.E."/>
            <person name="Bryant N.P."/>
            <person name="Burch P.E."/>
            <person name="Burkett C.E."/>
            <person name="Burrell K.L."/>
            <person name="Calderon E."/>
            <person name="Cardenas V."/>
            <person name="Carter K."/>
            <person name="Casias K."/>
            <person name="Cavazos I."/>
            <person name="Cavazos S.R."/>
            <person name="Ceasar H."/>
            <person name="Chacko J."/>
            <person name="Chan S.N."/>
            <person name="Chavez D."/>
            <person name="Christopoulos C."/>
            <person name="Chu J."/>
            <person name="Cockrell R."/>
            <person name="Cox C.D."/>
            <person name="Dang M."/>
            <person name="Dathorne S.R."/>
            <person name="David R."/>
            <person name="Davis C.M."/>
            <person name="Davy-Carroll L."/>
            <person name="Deshazo D.R."/>
            <person name="Donlin J.E."/>
            <person name="D'Souza L."/>
            <person name="Eaves K.A."/>
            <person name="Egan A."/>
            <person name="Emery-Cohen A.J."/>
            <person name="Escotto M."/>
            <person name="Flagg N."/>
            <person name="Forbes L.D."/>
            <person name="Gabisi A.M."/>
            <person name="Garza M."/>
            <person name="Hamilton C."/>
            <person name="Henderson N."/>
            <person name="Hernandez O."/>
            <person name="Hines S."/>
            <person name="Hogues M.E."/>
            <person name="Huang M."/>
            <person name="Idlebird D.G."/>
            <person name="Johnson R."/>
            <person name="Jolivet A."/>
            <person name="Jones S."/>
            <person name="Kagan R."/>
            <person name="King L.M."/>
            <person name="Leal B."/>
            <person name="Lebow H."/>
            <person name="Lee S."/>
            <person name="LeVan J.M."/>
            <person name="Lewis L.C."/>
            <person name="London P."/>
            <person name="Lorensuhewa L.M."/>
            <person name="Loulseged H."/>
            <person name="Lovett D.A."/>
            <person name="Lucier A."/>
            <person name="Lucier R.L."/>
            <person name="Ma J."/>
            <person name="Madu R.C."/>
            <person name="Mapua P."/>
            <person name="Martindale A.D."/>
            <person name="Martinez E."/>
            <person name="Massey E."/>
            <person name="Mawhiney S."/>
            <person name="Meador M.G."/>
            <person name="Mendez S."/>
            <person name="Mercado C."/>
            <person name="Mercado I.C."/>
            <person name="Merritt C.E."/>
            <person name="Miner Z.L."/>
            <person name="Minja E."/>
            <person name="Mitchell T."/>
            <person name="Mohabbat F."/>
            <person name="Mohabbat K."/>
            <person name="Montgomery B."/>
            <person name="Moore N."/>
            <person name="Morris S."/>
            <person name="Munidasa M."/>
            <person name="Ngo R.N."/>
            <person name="Nguyen N.B."/>
            <person name="Nickerson E."/>
            <person name="Nwaokelemeh O.O."/>
            <person name="Nwokenkwo S."/>
            <person name="Obregon M."/>
            <person name="Oguh M."/>
            <person name="Oragunye N."/>
            <person name="Oviedo R.J."/>
            <person name="Parish B.J."/>
            <person name="Parker D.N."/>
            <person name="Parrish J."/>
            <person name="Parks K.L."/>
            <person name="Paul H.A."/>
            <person name="Payton B.A."/>
            <person name="Perez A."/>
            <person name="Perrin W."/>
            <person name="Pickens A."/>
            <person name="Primus E.L."/>
            <person name="Pu L.-L."/>
            <person name="Puazo M."/>
            <person name="Quiles M.M."/>
            <person name="Quiroz J.B."/>
            <person name="Rabata D."/>
            <person name="Reeves K."/>
            <person name="Ruiz S.J."/>
            <person name="Shao H."/>
            <person name="Sisson I."/>
            <person name="Sonaike T."/>
            <person name="Sorelle R.P."/>
            <person name="Sutton A.E."/>
            <person name="Svatek A.F."/>
            <person name="Svetz L.A."/>
            <person name="Tamerisa K.S."/>
            <person name="Taylor T.R."/>
            <person name="Teague B."/>
            <person name="Thomas N."/>
            <person name="Thorn R.D."/>
            <person name="Trejos Z.Y."/>
            <person name="Trevino B.K."/>
            <person name="Ukegbu O.N."/>
            <person name="Urban J.B."/>
            <person name="Vasquez L.I."/>
            <person name="Vera V.A."/>
            <person name="Villasana D.M."/>
            <person name="Wang L."/>
            <person name="Ward-Moore S."/>
            <person name="Warren J.T."/>
            <person name="Wei X."/>
            <person name="White F."/>
            <person name="Williamson A.L."/>
            <person name="Wleczyk R."/>
            <person name="Wooden H.S."/>
            <person name="Wooden S.H."/>
            <person name="Yen J."/>
            <person name="Yoon L."/>
            <person name="Yoon V."/>
            <person name="Zorrilla S.E."/>
            <person name="Nelson D."/>
            <person name="Kucherlapati R."/>
            <person name="Weinstock G."/>
            <person name="Gibbs R.A."/>
        </authorList>
    </citation>
    <scope>NUCLEOTIDE SEQUENCE [LARGE SCALE GENOMIC DNA]</scope>
</reference>
<reference key="2">
    <citation type="journal article" date="2004" name="Genome Res.">
        <title>The status, quality, and expansion of the NIH full-length cDNA project: the Mammalian Gene Collection (MGC).</title>
        <authorList>
            <consortium name="The MGC Project Team"/>
        </authorList>
    </citation>
    <scope>NUCLEOTIDE SEQUENCE [LARGE SCALE MRNA]</scope>
    <scope>VARIANT LYS-249</scope>
    <source>
        <tissue>Colon</tissue>
    </source>
</reference>
<reference key="3">
    <citation type="journal article" date="2004" name="Nat. Genet.">
        <title>Complete sequencing and characterization of 21,243 full-length human cDNAs.</title>
        <authorList>
            <person name="Ota T."/>
            <person name="Suzuki Y."/>
            <person name="Nishikawa T."/>
            <person name="Otsuki T."/>
            <person name="Sugiyama T."/>
            <person name="Irie R."/>
            <person name="Wakamatsu A."/>
            <person name="Hayashi K."/>
            <person name="Sato H."/>
            <person name="Nagai K."/>
            <person name="Kimura K."/>
            <person name="Makita H."/>
            <person name="Sekine M."/>
            <person name="Obayashi M."/>
            <person name="Nishi T."/>
            <person name="Shibahara T."/>
            <person name="Tanaka T."/>
            <person name="Ishii S."/>
            <person name="Yamamoto J."/>
            <person name="Saito K."/>
            <person name="Kawai Y."/>
            <person name="Isono Y."/>
            <person name="Nakamura Y."/>
            <person name="Nagahari K."/>
            <person name="Murakami K."/>
            <person name="Yasuda T."/>
            <person name="Iwayanagi T."/>
            <person name="Wagatsuma M."/>
            <person name="Shiratori A."/>
            <person name="Sudo H."/>
            <person name="Hosoiri T."/>
            <person name="Kaku Y."/>
            <person name="Kodaira H."/>
            <person name="Kondo H."/>
            <person name="Sugawara M."/>
            <person name="Takahashi M."/>
            <person name="Kanda K."/>
            <person name="Yokoi T."/>
            <person name="Furuya T."/>
            <person name="Kikkawa E."/>
            <person name="Omura Y."/>
            <person name="Abe K."/>
            <person name="Kamihara K."/>
            <person name="Katsuta N."/>
            <person name="Sato K."/>
            <person name="Tanikawa M."/>
            <person name="Yamazaki M."/>
            <person name="Ninomiya K."/>
            <person name="Ishibashi T."/>
            <person name="Yamashita H."/>
            <person name="Murakawa K."/>
            <person name="Fujimori K."/>
            <person name="Tanai H."/>
            <person name="Kimata M."/>
            <person name="Watanabe M."/>
            <person name="Hiraoka S."/>
            <person name="Chiba Y."/>
            <person name="Ishida S."/>
            <person name="Ono Y."/>
            <person name="Takiguchi S."/>
            <person name="Watanabe S."/>
            <person name="Yosida M."/>
            <person name="Hotuta T."/>
            <person name="Kusano J."/>
            <person name="Kanehori K."/>
            <person name="Takahashi-Fujii A."/>
            <person name="Hara H."/>
            <person name="Tanase T.-O."/>
            <person name="Nomura Y."/>
            <person name="Togiya S."/>
            <person name="Komai F."/>
            <person name="Hara R."/>
            <person name="Takeuchi K."/>
            <person name="Arita M."/>
            <person name="Imose N."/>
            <person name="Musashino K."/>
            <person name="Yuuki H."/>
            <person name="Oshima A."/>
            <person name="Sasaki N."/>
            <person name="Aotsuka S."/>
            <person name="Yoshikawa Y."/>
            <person name="Matsunawa H."/>
            <person name="Ichihara T."/>
            <person name="Shiohata N."/>
            <person name="Sano S."/>
            <person name="Moriya S."/>
            <person name="Momiyama H."/>
            <person name="Satoh N."/>
            <person name="Takami S."/>
            <person name="Terashima Y."/>
            <person name="Suzuki O."/>
            <person name="Nakagawa S."/>
            <person name="Senoh A."/>
            <person name="Mizoguchi H."/>
            <person name="Goto Y."/>
            <person name="Shimizu F."/>
            <person name="Wakebe H."/>
            <person name="Hishigaki H."/>
            <person name="Watanabe T."/>
            <person name="Sugiyama A."/>
            <person name="Takemoto M."/>
            <person name="Kawakami B."/>
            <person name="Yamazaki M."/>
            <person name="Watanabe K."/>
            <person name="Kumagai A."/>
            <person name="Itakura S."/>
            <person name="Fukuzumi Y."/>
            <person name="Fujimori Y."/>
            <person name="Komiyama M."/>
            <person name="Tashiro H."/>
            <person name="Tanigami A."/>
            <person name="Fujiwara T."/>
            <person name="Ono T."/>
            <person name="Yamada K."/>
            <person name="Fujii Y."/>
            <person name="Ozaki K."/>
            <person name="Hirao M."/>
            <person name="Ohmori Y."/>
            <person name="Kawabata A."/>
            <person name="Hikiji T."/>
            <person name="Kobatake N."/>
            <person name="Inagaki H."/>
            <person name="Ikema Y."/>
            <person name="Okamoto S."/>
            <person name="Okitani R."/>
            <person name="Kawakami T."/>
            <person name="Noguchi S."/>
            <person name="Itoh T."/>
            <person name="Shigeta K."/>
            <person name="Senba T."/>
            <person name="Matsumura K."/>
            <person name="Nakajima Y."/>
            <person name="Mizuno T."/>
            <person name="Morinaga M."/>
            <person name="Sasaki M."/>
            <person name="Togashi T."/>
            <person name="Oyama M."/>
            <person name="Hata H."/>
            <person name="Watanabe M."/>
            <person name="Komatsu T."/>
            <person name="Mizushima-Sugano J."/>
            <person name="Satoh T."/>
            <person name="Shirai Y."/>
            <person name="Takahashi Y."/>
            <person name="Nakagawa K."/>
            <person name="Okumura K."/>
            <person name="Nagase T."/>
            <person name="Nomura N."/>
            <person name="Kikuchi H."/>
            <person name="Masuho Y."/>
            <person name="Yamashita R."/>
            <person name="Nakai K."/>
            <person name="Yada T."/>
            <person name="Nakamura Y."/>
            <person name="Ohara O."/>
            <person name="Isogai T."/>
            <person name="Sugano S."/>
        </authorList>
    </citation>
    <scope>NUCLEOTIDE SEQUENCE [LARGE SCALE MRNA] OF 1-240</scope>
    <source>
        <tissue>Ileal mucosa</tissue>
    </source>
</reference>
<protein>
    <recommendedName>
        <fullName evidence="3">Probable methyltransferase-like protein 25</fullName>
        <ecNumber evidence="3">2.1.1.-</ecNumber>
    </recommendedName>
</protein>
<sequence>MAASCPLPVTPDLPTLRAKLQGLLQFLRDALSISNAHTVDFYTESVWEELVDLPPETVLAALRKSASETEALPSETRPLVEAEWEAGMTDFPKIFCETSQKLVSVEAFALAAKYYSVQNLGICTPFEQLLVALRGNQNQRIGENQKAVEFMNMKKSHEVQAMSELISSIADYYGIKQVIDLGSGKGYLSSFLSLKYGLKVYGIDSSNTNTHGAEERNRKLKKHWKLCHAQSRLDVNGLALKMAKERKVQNKVKNKADTEEVFNNSPTNQEKMPTSAILPDFSGSVISNIRNQMETLHSQPHQEENLCFENSFSLINLLPINAVEPTSSQQIPNRETSEANKERRKMTSKSSESNIYSPLTSFITADSELHDIIKDLEDCLMVGLHTCGDLAPNTLRIFTSNSEIKGVCSVGCCYHLLSEEFENQHKERTQEKWGFPMCHYLKEERWCCGRNARMSACLALERVAAGQGLPTESLFYRAVLQDIIKDCYGITKCDRHVGKIYSKCSSFLDYVRRSLKKLGLDESKLPEKIIMNYYEKYKPRMNELEAFNMLKVVLAPCIETLILLDRLCYLKEQEDIAWSALVKLFDPVKSPRCYAVIALKKQQ</sequence>
<gene>
    <name type="primary">METTL25</name>
    <name type="synonym">C12orf26</name>
</gene>
<comment type="function">
    <text evidence="3">Probable methyltransferase.</text>
</comment>
<comment type="sequence caution" evidence="3">
    <conflict type="miscellaneous discrepancy">
        <sequence resource="EMBL-CDS" id="BAB15484"/>
    </conflict>
    <text>Contaminating sequence. Potential poly-A sequence.</text>
</comment>
<organism>
    <name type="scientific">Homo sapiens</name>
    <name type="common">Human</name>
    <dbReference type="NCBI Taxonomy" id="9606"/>
    <lineage>
        <taxon>Eukaryota</taxon>
        <taxon>Metazoa</taxon>
        <taxon>Chordata</taxon>
        <taxon>Craniata</taxon>
        <taxon>Vertebrata</taxon>
        <taxon>Euteleostomi</taxon>
        <taxon>Mammalia</taxon>
        <taxon>Eutheria</taxon>
        <taxon>Euarchontoglires</taxon>
        <taxon>Primates</taxon>
        <taxon>Haplorrhini</taxon>
        <taxon>Catarrhini</taxon>
        <taxon>Hominidae</taxon>
        <taxon>Homo</taxon>
    </lineage>
</organism>
<accession>Q8N6Q8</accession>
<accession>Q9H5Y3</accession>